<sequence length="90" mass="10150">MSFLSFLLGQKKSSASVAKERLQIILAHERSGRGDSPDYLPQLQQELVAVISKYVKINPDDIKVHLERQDTLEVLEVKIEMPQSETQASV</sequence>
<feature type="chain" id="PRO_0000298076" description="Cell division topological specificity factor">
    <location>
        <begin position="1"/>
        <end position="90"/>
    </location>
</feature>
<keyword id="KW-0131">Cell cycle</keyword>
<keyword id="KW-0132">Cell division</keyword>
<keyword id="KW-1185">Reference proteome</keyword>
<protein>
    <recommendedName>
        <fullName evidence="1">Cell division topological specificity factor</fullName>
    </recommendedName>
</protein>
<organism>
    <name type="scientific">Bordetella avium (strain 197N)</name>
    <dbReference type="NCBI Taxonomy" id="360910"/>
    <lineage>
        <taxon>Bacteria</taxon>
        <taxon>Pseudomonadati</taxon>
        <taxon>Pseudomonadota</taxon>
        <taxon>Betaproteobacteria</taxon>
        <taxon>Burkholderiales</taxon>
        <taxon>Alcaligenaceae</taxon>
        <taxon>Bordetella</taxon>
    </lineage>
</organism>
<gene>
    <name evidence="1" type="primary">minE</name>
    <name type="ordered locus">BAV2790</name>
</gene>
<evidence type="ECO:0000255" key="1">
    <source>
        <dbReference type="HAMAP-Rule" id="MF_00262"/>
    </source>
</evidence>
<comment type="function">
    <text evidence="1">Prevents the cell division inhibition by proteins MinC and MinD at internal division sites while permitting inhibition at polar sites. This ensures cell division at the proper site by restricting the formation of a division septum at the midpoint of the long axis of the cell.</text>
</comment>
<comment type="similarity">
    <text evidence="1">Belongs to the MinE family.</text>
</comment>
<proteinExistence type="inferred from homology"/>
<name>MINE_BORA1</name>
<reference key="1">
    <citation type="journal article" date="2006" name="J. Bacteriol.">
        <title>Comparison of the genome sequence of the poultry pathogen Bordetella avium with those of B. bronchiseptica, B. pertussis, and B. parapertussis reveals extensive diversity in surface structures associated with host interaction.</title>
        <authorList>
            <person name="Sebaihia M."/>
            <person name="Preston A."/>
            <person name="Maskell D.J."/>
            <person name="Kuzmiak H."/>
            <person name="Connell T.D."/>
            <person name="King N.D."/>
            <person name="Orndorff P.E."/>
            <person name="Miyamoto D.M."/>
            <person name="Thomson N.R."/>
            <person name="Harris D."/>
            <person name="Goble A."/>
            <person name="Lord A."/>
            <person name="Murphy L."/>
            <person name="Quail M.A."/>
            <person name="Rutter S."/>
            <person name="Squares R."/>
            <person name="Squares S."/>
            <person name="Woodward J."/>
            <person name="Parkhill J."/>
            <person name="Temple L.M."/>
        </authorList>
    </citation>
    <scope>NUCLEOTIDE SEQUENCE [LARGE SCALE GENOMIC DNA]</scope>
    <source>
        <strain>197N</strain>
    </source>
</reference>
<accession>Q2KVW5</accession>
<dbReference type="EMBL" id="AM167904">
    <property type="protein sequence ID" value="CAJ50401.1"/>
    <property type="molecule type" value="Genomic_DNA"/>
</dbReference>
<dbReference type="RefSeq" id="WP_012418432.1">
    <property type="nucleotide sequence ID" value="NC_010645.1"/>
</dbReference>
<dbReference type="SMR" id="Q2KVW5"/>
<dbReference type="STRING" id="360910.BAV2790"/>
<dbReference type="GeneID" id="92933962"/>
<dbReference type="KEGG" id="bav:BAV2790"/>
<dbReference type="eggNOG" id="COG0851">
    <property type="taxonomic scope" value="Bacteria"/>
</dbReference>
<dbReference type="HOGENOM" id="CLU_137929_2_1_4"/>
<dbReference type="OrthoDB" id="9802655at2"/>
<dbReference type="Proteomes" id="UP000001977">
    <property type="component" value="Chromosome"/>
</dbReference>
<dbReference type="GO" id="GO:0051301">
    <property type="term" value="P:cell division"/>
    <property type="evidence" value="ECO:0007669"/>
    <property type="project" value="UniProtKB-KW"/>
</dbReference>
<dbReference type="GO" id="GO:0032955">
    <property type="term" value="P:regulation of division septum assembly"/>
    <property type="evidence" value="ECO:0007669"/>
    <property type="project" value="InterPro"/>
</dbReference>
<dbReference type="FunFam" id="3.30.1070.10:FF:000001">
    <property type="entry name" value="Cell division topological specificity factor"/>
    <property type="match status" value="1"/>
</dbReference>
<dbReference type="Gene3D" id="3.30.1070.10">
    <property type="entry name" value="Cell division topological specificity factor MinE"/>
    <property type="match status" value="1"/>
</dbReference>
<dbReference type="HAMAP" id="MF_00262">
    <property type="entry name" value="MinE"/>
    <property type="match status" value="1"/>
</dbReference>
<dbReference type="InterPro" id="IPR005527">
    <property type="entry name" value="MinE"/>
</dbReference>
<dbReference type="InterPro" id="IPR036707">
    <property type="entry name" value="MinE_sf"/>
</dbReference>
<dbReference type="NCBIfam" id="TIGR01215">
    <property type="entry name" value="minE"/>
    <property type="match status" value="1"/>
</dbReference>
<dbReference type="NCBIfam" id="NF001422">
    <property type="entry name" value="PRK00296.1"/>
    <property type="match status" value="1"/>
</dbReference>
<dbReference type="NCBIfam" id="NF010595">
    <property type="entry name" value="PRK13989.1"/>
    <property type="match status" value="1"/>
</dbReference>
<dbReference type="Pfam" id="PF03776">
    <property type="entry name" value="MinE"/>
    <property type="match status" value="1"/>
</dbReference>
<dbReference type="SUPFAM" id="SSF55229">
    <property type="entry name" value="Cell division protein MinE topological specificity domain"/>
    <property type="match status" value="1"/>
</dbReference>